<keyword id="KW-0002">3D-structure</keyword>
<keyword id="KW-0965">Cell junction</keyword>
<keyword id="KW-0966">Cell projection</keyword>
<keyword id="KW-0963">Cytoplasm</keyword>
<keyword id="KW-0343">GTPase activation</keyword>
<keyword id="KW-0539">Nucleus</keyword>
<keyword id="KW-0581">Phagocytosis</keyword>
<keyword id="KW-0597">Phosphoprotein</keyword>
<keyword id="KW-1185">Reference proteome</keyword>
<keyword id="KW-0729">SH3-binding</keyword>
<keyword id="KW-0796">Tight junction</keyword>
<reference key="1">
    <citation type="journal article" date="2009" name="PLoS Biol.">
        <title>Lineage-specific biology revealed by a finished genome assembly of the mouse.</title>
        <authorList>
            <person name="Church D.M."/>
            <person name="Goodstadt L."/>
            <person name="Hillier L.W."/>
            <person name="Zody M.C."/>
            <person name="Goldstein S."/>
            <person name="She X."/>
            <person name="Bult C.J."/>
            <person name="Agarwala R."/>
            <person name="Cherry J.L."/>
            <person name="DiCuccio M."/>
            <person name="Hlavina W."/>
            <person name="Kapustin Y."/>
            <person name="Meric P."/>
            <person name="Maglott D."/>
            <person name="Birtle Z."/>
            <person name="Marques A.C."/>
            <person name="Graves T."/>
            <person name="Zhou S."/>
            <person name="Teague B."/>
            <person name="Potamousis K."/>
            <person name="Churas C."/>
            <person name="Place M."/>
            <person name="Herschleb J."/>
            <person name="Runnheim R."/>
            <person name="Forrest D."/>
            <person name="Amos-Landgraf J."/>
            <person name="Schwartz D.C."/>
            <person name="Cheng Z."/>
            <person name="Lindblad-Toh K."/>
            <person name="Eichler E.E."/>
            <person name="Ponting C.P."/>
        </authorList>
    </citation>
    <scope>NUCLEOTIDE SEQUENCE [LARGE SCALE GENOMIC DNA]</scope>
    <source>
        <strain>C57BL/6J</strain>
    </source>
</reference>
<reference key="2">
    <citation type="journal article" date="2004" name="Genome Res.">
        <title>The status, quality, and expansion of the NIH full-length cDNA project: the Mammalian Gene Collection (MGC).</title>
        <authorList>
            <consortium name="The MGC Project Team"/>
        </authorList>
    </citation>
    <scope>NUCLEOTIDE SEQUENCE [LARGE SCALE MRNA] OF 55-680</scope>
</reference>
<reference key="3">
    <citation type="journal article" date="1995" name="EMBO J.">
        <title>3BP-1, an SH3 domain binding protein, has GAP activity for Rac and inhibits growth factor-induced membrane ruffling in fibroblasts.</title>
        <authorList>
            <person name="Cicchetti P."/>
            <person name="Ridley A.J."/>
            <person name="Zheng Y."/>
            <person name="Cerione R.A."/>
            <person name="Baltimore D."/>
        </authorList>
    </citation>
    <scope>NUCLEOTIDE SEQUENCE [MRNA] OF 70-680</scope>
    <scope>FUNCTION</scope>
    <scope>TISSUE SPECIFICITY</scope>
</reference>
<reference key="4">
    <citation type="journal article" date="1992" name="Science">
        <title>Identification of a protein that binds to the SH3 region of Abl and is similar to Bcr and GAP-rho.</title>
        <authorList>
            <person name="Cicchetti P."/>
            <person name="Mayer B.J."/>
            <person name="Thiel G."/>
            <person name="Baltimore D."/>
        </authorList>
    </citation>
    <scope>NUCLEOTIDE SEQUENCE [MRNA] OF 342-680</scope>
    <scope>SUBUNIT</scope>
</reference>
<reference key="5">
    <citation type="journal article" date="1999" name="Curr. Biol.">
        <title>Sema3A-induced growth-cone collapse is mediated by Rac1 amino acids 17-32.</title>
        <authorList>
            <person name="Vaestrik I."/>
            <person name="Eickholt B.J."/>
            <person name="Walsh F.S."/>
            <person name="Ridley A."/>
            <person name="Doherty P."/>
        </authorList>
    </citation>
    <scope>INTERACTION WITH RAC1</scope>
</reference>
<reference key="6">
    <citation type="journal article" date="2009" name="Immunity">
        <title>The phagosomal proteome in interferon-gamma-activated macrophages.</title>
        <authorList>
            <person name="Trost M."/>
            <person name="English L."/>
            <person name="Lemieux S."/>
            <person name="Courcelles M."/>
            <person name="Desjardins M."/>
            <person name="Thibault P."/>
        </authorList>
    </citation>
    <scope>PHOSPHORYLATION [LARGE SCALE ANALYSIS] AT SER-632</scope>
    <scope>IDENTIFICATION BY MASS SPECTROMETRY [LARGE SCALE ANALYSIS]</scope>
</reference>
<reference key="7">
    <citation type="journal article" date="2010" name="Cell">
        <title>A tissue-specific atlas of mouse protein phosphorylation and expression.</title>
        <authorList>
            <person name="Huttlin E.L."/>
            <person name="Jedrychowski M.P."/>
            <person name="Elias J.E."/>
            <person name="Goswami T."/>
            <person name="Rad R."/>
            <person name="Beausoleil S.A."/>
            <person name="Villen J."/>
            <person name="Haas W."/>
            <person name="Sowa M.E."/>
            <person name="Gygi S.P."/>
        </authorList>
    </citation>
    <scope>PHOSPHORYLATION [LARGE SCALE ANALYSIS] AT SER-535; SER-582 AND THR-592</scope>
    <scope>IDENTIFICATION BY MASS SPECTROMETRY [LARGE SCALE ANALYSIS]</scope>
    <source>
        <tissue>Kidney</tissue>
        <tissue>Lung</tissue>
        <tissue>Spleen</tissue>
        <tissue>Testis</tissue>
    </source>
</reference>
<reference key="8">
    <citation type="journal article" date="2012" name="J. Cell Biol.">
        <title>Epithelial junction formation requires confinement of Cdc42 activity by a novel SH3BP1 complex.</title>
        <authorList>
            <person name="Elbediwy A."/>
            <person name="Zihni C."/>
            <person name="Terry S.J."/>
            <person name="Clark P."/>
            <person name="Matter K."/>
            <person name="Balda M.S."/>
        </authorList>
    </citation>
    <scope>SUBCELLULAR LOCATION</scope>
</reference>
<reference key="9">
    <citation type="journal article" date="2014" name="Mol. Cell. Proteomics">
        <title>Immunoaffinity enrichment and mass spectrometry analysis of protein methylation.</title>
        <authorList>
            <person name="Guo A."/>
            <person name="Gu H."/>
            <person name="Zhou J."/>
            <person name="Mulhern D."/>
            <person name="Wang Y."/>
            <person name="Lee K.A."/>
            <person name="Yang V."/>
            <person name="Aguiar M."/>
            <person name="Kornhauser J."/>
            <person name="Jia X."/>
            <person name="Ren J."/>
            <person name="Beausoleil S.A."/>
            <person name="Silva J.C."/>
            <person name="Vemulapalli V."/>
            <person name="Bedford M.T."/>
            <person name="Comb M.J."/>
        </authorList>
    </citation>
    <scope>IDENTIFICATION BY MASS SPECTROMETRY [LARGE SCALE ANALYSIS]</scope>
    <source>
        <tissue>Embryo</tissue>
    </source>
</reference>
<reference key="10">
    <citation type="journal article" date="1993" name="Science">
        <title>Identification of a ten-amino acid proline-rich SH3 binding site.</title>
        <authorList>
            <person name="Ren R."/>
            <person name="Mayer B.J."/>
            <person name="Cicchetti P."/>
            <person name="Baltimore D."/>
        </authorList>
    </citation>
    <scope>X-RAY CRYSTALLOGRAPHY (2.0 ANGSTROMS) OF 607-616 IN COMPLEX WITH ABL1 SH3 DOMAIN</scope>
    <scope>MOTIF</scope>
</reference>
<evidence type="ECO:0000250" key="1">
    <source>
        <dbReference type="UniProtKB" id="D3ZFJ3"/>
    </source>
</evidence>
<evidence type="ECO:0000250" key="2">
    <source>
        <dbReference type="UniProtKB" id="Q9Y3L3"/>
    </source>
</evidence>
<evidence type="ECO:0000255" key="3">
    <source>
        <dbReference type="PROSITE-ProRule" id="PRU00172"/>
    </source>
</evidence>
<evidence type="ECO:0000255" key="4">
    <source>
        <dbReference type="PROSITE-ProRule" id="PRU00361"/>
    </source>
</evidence>
<evidence type="ECO:0000256" key="5">
    <source>
        <dbReference type="SAM" id="MobiDB-lite"/>
    </source>
</evidence>
<evidence type="ECO:0000269" key="6">
    <source>
    </source>
</evidence>
<evidence type="ECO:0000269" key="7">
    <source>
    </source>
</evidence>
<evidence type="ECO:0000269" key="8">
    <source>
    </source>
</evidence>
<evidence type="ECO:0000269" key="9">
    <source>
    </source>
</evidence>
<evidence type="ECO:0000269" key="10">
    <source>
    </source>
</evidence>
<evidence type="ECO:0000303" key="11">
    <source>
    </source>
</evidence>
<evidence type="ECO:0000305" key="12"/>
<evidence type="ECO:0000312" key="13">
    <source>
        <dbReference type="MGI" id="MGI:104603"/>
    </source>
</evidence>
<evidence type="ECO:0007744" key="14">
    <source>
    </source>
</evidence>
<evidence type="ECO:0007744" key="15">
    <source>
    </source>
</evidence>
<accession>P55194</accession>
<accession>A2A5V4</accession>
<accession>E9QMQ2</accession>
<accession>Q99KK8</accession>
<dbReference type="EMBL" id="X87671">
    <property type="protein sequence ID" value="CAA61011.1"/>
    <property type="status" value="ALT_INIT"/>
    <property type="molecule type" value="mRNA"/>
</dbReference>
<dbReference type="EMBL" id="AL592169">
    <property type="status" value="NOT_ANNOTATED_CDS"/>
    <property type="molecule type" value="Genomic_DNA"/>
</dbReference>
<dbReference type="EMBL" id="BC004598">
    <property type="protein sequence ID" value="AAH04598.1"/>
    <property type="status" value="ALT_INIT"/>
    <property type="molecule type" value="mRNA"/>
</dbReference>
<dbReference type="CCDS" id="CCDS84176.1"/>
<dbReference type="PIR" id="S56144">
    <property type="entry name" value="S56144"/>
</dbReference>
<dbReference type="RefSeq" id="NP_001303613.1">
    <property type="nucleotide sequence ID" value="NM_001316684.2"/>
</dbReference>
<dbReference type="PDB" id="1ABO">
    <property type="method" value="X-ray"/>
    <property type="resolution" value="2.00 A"/>
    <property type="chains" value="C/D=607-616"/>
</dbReference>
<dbReference type="PDBsum" id="1ABO"/>
<dbReference type="SMR" id="P55194"/>
<dbReference type="FunCoup" id="P55194">
    <property type="interactions" value="1357"/>
</dbReference>
<dbReference type="IntAct" id="P55194">
    <property type="interactions" value="4"/>
</dbReference>
<dbReference type="MINT" id="P55194"/>
<dbReference type="STRING" id="10090.ENSMUSP00000001226"/>
<dbReference type="GlyGen" id="P55194">
    <property type="glycosylation" value="1 site"/>
</dbReference>
<dbReference type="iPTMnet" id="P55194"/>
<dbReference type="PhosphoSitePlus" id="P55194"/>
<dbReference type="jPOST" id="P55194"/>
<dbReference type="PaxDb" id="10090-ENSMUSP00000052181"/>
<dbReference type="PeptideAtlas" id="P55194"/>
<dbReference type="ProteomicsDB" id="286029"/>
<dbReference type="Pumba" id="P55194"/>
<dbReference type="Antibodypedia" id="214">
    <property type="antibodies" value="229 antibodies from 32 providers"/>
</dbReference>
<dbReference type="Ensembl" id="ENSMUST00000001226.11">
    <property type="protein sequence ID" value="ENSMUSP00000001226.4"/>
    <property type="gene ID" value="ENSMUSG00000022436.17"/>
</dbReference>
<dbReference type="GeneID" id="20401"/>
<dbReference type="KEGG" id="mmu:20401"/>
<dbReference type="AGR" id="MGI:104603"/>
<dbReference type="CTD" id="23616"/>
<dbReference type="MGI" id="MGI:104603">
    <property type="gene designation" value="Sh3bp1"/>
</dbReference>
<dbReference type="VEuPathDB" id="HostDB:ENSMUSG00000022436"/>
<dbReference type="eggNOG" id="KOG4270">
    <property type="taxonomic scope" value="Eukaryota"/>
</dbReference>
<dbReference type="GeneTree" id="ENSGT00940000158369"/>
<dbReference type="InParanoid" id="P55194"/>
<dbReference type="OMA" id="WDYFFEG"/>
<dbReference type="OrthoDB" id="19923at2759"/>
<dbReference type="Reactome" id="R-MMU-9013149">
    <property type="pathway name" value="RAC1 GTPase cycle"/>
</dbReference>
<dbReference type="BioGRID-ORCS" id="20401">
    <property type="hits" value="3 hits in 61 CRISPR screens"/>
</dbReference>
<dbReference type="ChiTaRS" id="Sh3bp1">
    <property type="organism name" value="mouse"/>
</dbReference>
<dbReference type="EvolutionaryTrace" id="P55194"/>
<dbReference type="PRO" id="PR:P55194"/>
<dbReference type="Proteomes" id="UP000000589">
    <property type="component" value="Chromosome 15"/>
</dbReference>
<dbReference type="RNAct" id="P55194">
    <property type="molecule type" value="protein"/>
</dbReference>
<dbReference type="Bgee" id="ENSMUSG00000022436">
    <property type="expression patterns" value="Expressed in granulocyte and 196 other cell types or tissues"/>
</dbReference>
<dbReference type="ExpressionAtlas" id="P55194">
    <property type="expression patterns" value="baseline and differential"/>
</dbReference>
<dbReference type="GO" id="GO:0005912">
    <property type="term" value="C:adherens junction"/>
    <property type="evidence" value="ECO:0000250"/>
    <property type="project" value="UniProtKB"/>
</dbReference>
<dbReference type="GO" id="GO:0005923">
    <property type="term" value="C:bicellular tight junction"/>
    <property type="evidence" value="ECO:0000314"/>
    <property type="project" value="UniProtKB"/>
</dbReference>
<dbReference type="GO" id="GO:0031252">
    <property type="term" value="C:cell leading edge"/>
    <property type="evidence" value="ECO:0000250"/>
    <property type="project" value="UniProtKB"/>
</dbReference>
<dbReference type="GO" id="GO:0005829">
    <property type="term" value="C:cytosol"/>
    <property type="evidence" value="ECO:0000250"/>
    <property type="project" value="UniProtKB"/>
</dbReference>
<dbReference type="GO" id="GO:0000145">
    <property type="term" value="C:exocyst"/>
    <property type="evidence" value="ECO:0007669"/>
    <property type="project" value="Ensembl"/>
</dbReference>
<dbReference type="GO" id="GO:0030027">
    <property type="term" value="C:lamellipodium"/>
    <property type="evidence" value="ECO:0007669"/>
    <property type="project" value="Ensembl"/>
</dbReference>
<dbReference type="GO" id="GO:0005634">
    <property type="term" value="C:nucleus"/>
    <property type="evidence" value="ECO:0000250"/>
    <property type="project" value="UniProtKB"/>
</dbReference>
<dbReference type="GO" id="GO:0001891">
    <property type="term" value="C:phagocytic cup"/>
    <property type="evidence" value="ECO:0000250"/>
    <property type="project" value="UniProtKB"/>
</dbReference>
<dbReference type="GO" id="GO:0005096">
    <property type="term" value="F:GTPase activator activity"/>
    <property type="evidence" value="ECO:0000314"/>
    <property type="project" value="UniProtKB"/>
</dbReference>
<dbReference type="GO" id="GO:0030215">
    <property type="term" value="F:semaphorin receptor binding"/>
    <property type="evidence" value="ECO:0007669"/>
    <property type="project" value="Ensembl"/>
</dbReference>
<dbReference type="GO" id="GO:0017124">
    <property type="term" value="F:SH3 domain binding"/>
    <property type="evidence" value="ECO:0000353"/>
    <property type="project" value="MGI"/>
</dbReference>
<dbReference type="GO" id="GO:0007015">
    <property type="term" value="P:actin filament organization"/>
    <property type="evidence" value="ECO:0000250"/>
    <property type="project" value="UniProtKB"/>
</dbReference>
<dbReference type="GO" id="GO:0034329">
    <property type="term" value="P:cell junction assembly"/>
    <property type="evidence" value="ECO:0000250"/>
    <property type="project" value="UniProtKB"/>
</dbReference>
<dbReference type="GO" id="GO:0016477">
    <property type="term" value="P:cell migration"/>
    <property type="evidence" value="ECO:0000250"/>
    <property type="project" value="UniProtKB"/>
</dbReference>
<dbReference type="GO" id="GO:0045198">
    <property type="term" value="P:establishment of epithelial cell apical/basal polarity"/>
    <property type="evidence" value="ECO:0000250"/>
    <property type="project" value="UniProtKB"/>
</dbReference>
<dbReference type="GO" id="GO:0051058">
    <property type="term" value="P:negative regulation of small GTPase mediated signal transduction"/>
    <property type="evidence" value="ECO:0000250"/>
    <property type="project" value="UniProtKB"/>
</dbReference>
<dbReference type="GO" id="GO:0006911">
    <property type="term" value="P:phagocytosis, engulfment"/>
    <property type="evidence" value="ECO:0000250"/>
    <property type="project" value="UniProtKB"/>
</dbReference>
<dbReference type="GO" id="GO:0043547">
    <property type="term" value="P:positive regulation of GTPase activity"/>
    <property type="evidence" value="ECO:0000314"/>
    <property type="project" value="UniProtKB"/>
</dbReference>
<dbReference type="GO" id="GO:0030834">
    <property type="term" value="P:regulation of actin filament depolymerization"/>
    <property type="evidence" value="ECO:0007669"/>
    <property type="project" value="Ensembl"/>
</dbReference>
<dbReference type="GO" id="GO:0043535">
    <property type="term" value="P:regulation of blood vessel endothelial cell migration"/>
    <property type="evidence" value="ECO:0007669"/>
    <property type="project" value="Ensembl"/>
</dbReference>
<dbReference type="GO" id="GO:0097178">
    <property type="term" value="P:ruffle assembly"/>
    <property type="evidence" value="ECO:0000315"/>
    <property type="project" value="UniProtKB"/>
</dbReference>
<dbReference type="GO" id="GO:0071526">
    <property type="term" value="P:semaphorin-plexin signaling pathway"/>
    <property type="evidence" value="ECO:0000250"/>
    <property type="project" value="UniProtKB"/>
</dbReference>
<dbReference type="CDD" id="cd07620">
    <property type="entry name" value="BAR_SH3BP1"/>
    <property type="match status" value="1"/>
</dbReference>
<dbReference type="FunFam" id="1.10.555.10:FF:000001">
    <property type="entry name" value="Rho GTPase activating protein 44"/>
    <property type="match status" value="1"/>
</dbReference>
<dbReference type="FunFam" id="1.20.1270.60:FF:000053">
    <property type="entry name" value="SH3 domain-binding protein 1"/>
    <property type="match status" value="1"/>
</dbReference>
<dbReference type="Gene3D" id="1.20.1270.60">
    <property type="entry name" value="Arfaptin homology (AH) domain/BAR domain"/>
    <property type="match status" value="1"/>
</dbReference>
<dbReference type="Gene3D" id="1.10.555.10">
    <property type="entry name" value="Rho GTPase activation protein"/>
    <property type="match status" value="1"/>
</dbReference>
<dbReference type="IDEAL" id="IID50285"/>
<dbReference type="InterPro" id="IPR027267">
    <property type="entry name" value="AH/BAR_dom_sf"/>
</dbReference>
<dbReference type="InterPro" id="IPR004148">
    <property type="entry name" value="BAR_dom"/>
</dbReference>
<dbReference type="InterPro" id="IPR047165">
    <property type="entry name" value="RHG17/44/SH3BP1-like"/>
</dbReference>
<dbReference type="InterPro" id="IPR008936">
    <property type="entry name" value="Rho_GTPase_activation_prot"/>
</dbReference>
<dbReference type="InterPro" id="IPR000198">
    <property type="entry name" value="RhoGAP_dom"/>
</dbReference>
<dbReference type="PANTHER" id="PTHR14130">
    <property type="entry name" value="3BP-1 RELATED RHOGAP"/>
    <property type="match status" value="1"/>
</dbReference>
<dbReference type="PANTHER" id="PTHR14130:SF12">
    <property type="entry name" value="BARGIN-RELATED"/>
    <property type="match status" value="1"/>
</dbReference>
<dbReference type="Pfam" id="PF03114">
    <property type="entry name" value="BAR"/>
    <property type="match status" value="1"/>
</dbReference>
<dbReference type="Pfam" id="PF00620">
    <property type="entry name" value="RhoGAP"/>
    <property type="match status" value="1"/>
</dbReference>
<dbReference type="SMART" id="SM00721">
    <property type="entry name" value="BAR"/>
    <property type="match status" value="1"/>
</dbReference>
<dbReference type="SMART" id="SM00324">
    <property type="entry name" value="RhoGAP"/>
    <property type="match status" value="1"/>
</dbReference>
<dbReference type="SUPFAM" id="SSF103657">
    <property type="entry name" value="BAR/IMD domain-like"/>
    <property type="match status" value="1"/>
</dbReference>
<dbReference type="SUPFAM" id="SSF48350">
    <property type="entry name" value="GTPase activation domain, GAP"/>
    <property type="match status" value="1"/>
</dbReference>
<dbReference type="PROSITE" id="PS51021">
    <property type="entry name" value="BAR"/>
    <property type="match status" value="1"/>
</dbReference>
<dbReference type="PROSITE" id="PS50238">
    <property type="entry name" value="RHOGAP"/>
    <property type="match status" value="1"/>
</dbReference>
<name>3BP1_MOUSE</name>
<protein>
    <recommendedName>
        <fullName evidence="13">SH3 domain-binding protein 1</fullName>
        <shortName evidence="11">3BP-1</shortName>
    </recommendedName>
</protein>
<comment type="function">
    <text evidence="2 9">GTPase activating protein (GAP) which specifically converts GTP-bound Rho-type GTPases including RAC1 and CDC42 in their inactive GDP-bound form (PubMed:7621827). By specifically inactivating RAC1 at the leading edge of migrating cells, it regulates the spatiotemporal organization of cell protrusions which is important for proper cell migration. Also negatively regulates CDC42 in the process of actin remodeling and the formation of epithelial cell junctions. Through its GAP activity toward RAC1 and/or CDC42 plays a specific role in phagocytosis of large particles. Specifically recruited by a PI3 kinase/PI3K-dependent mechanism to sites of large particles engagement, inactivates RAC1 and/or CDC42 allowing the reorganization of the underlying actin cytoskeleton required for engulfment. It also plays a role in angiogenesis and the process of repulsive guidance as part of a semaphorin-plexin signaling pathway. Following the binding of PLXND1 to extracellular SEMA3E it dissociates from PLXND1 and inactivates RAC1, inducing the intracellular reorganization of the actin cytoskeleton and the collapse of cells (By similarity).</text>
</comment>
<comment type="subunit">
    <text evidence="2 6 7 10">Interacts with RAC1 (PubMed:10508610). Interacts with the exocyst via EXOC4 and EXOC8; required for the localization of both SH3BP1 and the exocyst to the leading edge of migrating cells. Interacts with CD2AP and CGNL1; probably part of a complex at cell junctions. Interacts with CAPZA1; recruits CAPZA1 to forming cell junctions. May interact with AFDN. Interacts with PLXND1; they dissociate upon SEMA3E binding to PLXND1 allowing SH3BP1 to transduce downstream signal through RAC1 inactivation (By similarity). Interacts with ABL1, GRB2 and SRC (via SH3 domain) (PubMed:1379745, PubMed:8438166).</text>
</comment>
<comment type="subcellular location">
    <subcellularLocation>
        <location evidence="2">Cell projection</location>
    </subcellularLocation>
    <subcellularLocation>
        <location evidence="8">Cell junction</location>
        <location evidence="8">Tight junction</location>
    </subcellularLocation>
    <subcellularLocation>
        <location evidence="2">Cell junction</location>
        <location evidence="2">Adherens junction</location>
    </subcellularLocation>
    <subcellularLocation>
        <location evidence="2">Cell projection</location>
        <location evidence="2">Phagocytic cup</location>
    </subcellularLocation>
    <subcellularLocation>
        <location evidence="2">Nucleus</location>
    </subcellularLocation>
    <subcellularLocation>
        <location evidence="2">Cytoplasm</location>
        <location evidence="2">Cytosol</location>
    </subcellularLocation>
    <text evidence="2">Localizes at the leading edge of migrating cells. Accumulation at forming phagocytic cups is PI3 kinase/PI3K-dependent and is specific for sites of large particles engagement and their phosphatidylinositol 3,4,5-triphosphate membrane content.</text>
</comment>
<comment type="tissue specificity">
    <text evidence="9">Expressed in all tissues examined. Highest levels found in spleen and brain, lowest in heart and liver.</text>
</comment>
<comment type="domain">
    <text evidence="2">The BAR domain mediates interaction with the exocyst components EXOC4 and EXOC8 and is required for the function in cell migration. It also mediates the interaction with PLXND1.</text>
</comment>
<comment type="sequence caution" evidence="12">
    <conflict type="erroneous initiation">
        <sequence resource="EMBL-CDS" id="AAH04598"/>
    </conflict>
    <text>Truncated N-terminus.</text>
</comment>
<comment type="sequence caution" evidence="12">
    <conflict type="erroneous initiation">
        <sequence resource="EMBL-CDS" id="CAA61011"/>
    </conflict>
    <text>Truncated N-terminus.</text>
</comment>
<organism>
    <name type="scientific">Mus musculus</name>
    <name type="common">Mouse</name>
    <dbReference type="NCBI Taxonomy" id="10090"/>
    <lineage>
        <taxon>Eukaryota</taxon>
        <taxon>Metazoa</taxon>
        <taxon>Chordata</taxon>
        <taxon>Craniata</taxon>
        <taxon>Vertebrata</taxon>
        <taxon>Euteleostomi</taxon>
        <taxon>Mammalia</taxon>
        <taxon>Eutheria</taxon>
        <taxon>Euarchontoglires</taxon>
        <taxon>Glires</taxon>
        <taxon>Rodentia</taxon>
        <taxon>Myomorpha</taxon>
        <taxon>Muroidea</taxon>
        <taxon>Muridae</taxon>
        <taxon>Murinae</taxon>
        <taxon>Mus</taxon>
        <taxon>Mus</taxon>
    </lineage>
</organism>
<feature type="chain" id="PRO_0000056724" description="SH3 domain-binding protein 1">
    <location>
        <begin position="1"/>
        <end position="680"/>
    </location>
</feature>
<feature type="domain" description="BAR" evidence="4">
    <location>
        <begin position="81"/>
        <end position="262"/>
    </location>
</feature>
<feature type="domain" description="Rho-GAP" evidence="3">
    <location>
        <begin position="276"/>
        <end position="469"/>
    </location>
</feature>
<feature type="region of interest" description="Interaction with CGNL1" evidence="2">
    <location>
        <begin position="1"/>
        <end position="275"/>
    </location>
</feature>
<feature type="region of interest" description="Disordered" evidence="5">
    <location>
        <begin position="1"/>
        <end position="24"/>
    </location>
</feature>
<feature type="region of interest" description="Disordered" evidence="5">
    <location>
        <begin position="160"/>
        <end position="184"/>
    </location>
</feature>
<feature type="region of interest" description="Interaction with CD2AP" evidence="2">
    <location>
        <begin position="470"/>
        <end position="680"/>
    </location>
</feature>
<feature type="region of interest" description="Disordered" evidence="5">
    <location>
        <begin position="488"/>
        <end position="680"/>
    </location>
</feature>
<feature type="short sequence motif" description="SH3-binding" evidence="10">
    <location>
        <begin position="607"/>
        <end position="616"/>
    </location>
</feature>
<feature type="compositionally biased region" description="Basic residues" evidence="5">
    <location>
        <begin position="1"/>
        <end position="11"/>
    </location>
</feature>
<feature type="compositionally biased region" description="Polar residues" evidence="5">
    <location>
        <begin position="160"/>
        <end position="169"/>
    </location>
</feature>
<feature type="compositionally biased region" description="Pro residues" evidence="5">
    <location>
        <begin position="502"/>
        <end position="516"/>
    </location>
</feature>
<feature type="compositionally biased region" description="Polar residues" evidence="5">
    <location>
        <begin position="536"/>
        <end position="546"/>
    </location>
</feature>
<feature type="compositionally biased region" description="Pro residues" evidence="5">
    <location>
        <begin position="561"/>
        <end position="571"/>
    </location>
</feature>
<feature type="compositionally biased region" description="Pro residues" evidence="5">
    <location>
        <begin position="609"/>
        <end position="621"/>
    </location>
</feature>
<feature type="compositionally biased region" description="Pro residues" evidence="5">
    <location>
        <begin position="660"/>
        <end position="671"/>
    </location>
</feature>
<feature type="site" description="Arginine finger; crucial for GTP hydrolysis by stabilizing the transition state" evidence="3">
    <location>
        <position position="312"/>
    </location>
</feature>
<feature type="modified residue" description="Phosphoserine" evidence="1">
    <location>
        <position position="241"/>
    </location>
</feature>
<feature type="modified residue" description="Phosphoserine" evidence="2">
    <location>
        <position position="262"/>
    </location>
</feature>
<feature type="modified residue" description="Phosphoserine" evidence="15">
    <location>
        <position position="535"/>
    </location>
</feature>
<feature type="modified residue" description="Phosphoserine" evidence="15">
    <location>
        <position position="582"/>
    </location>
</feature>
<feature type="modified residue" description="Phosphothreonine" evidence="15">
    <location>
        <position position="592"/>
    </location>
</feature>
<feature type="modified residue" description="Phosphoserine" evidence="14">
    <location>
        <position position="632"/>
    </location>
</feature>
<feature type="sequence conflict" description="In Ref. 3; CAA61011." evidence="12" ref="3">
    <original>PLS</original>
    <variation>RSG</variation>
    <location>
        <begin position="126"/>
        <end position="128"/>
    </location>
</feature>
<feature type="sequence conflict" description="In Ref. 3; CAA61011 and 2; AAH04598." evidence="12" ref="3 2">
    <original>S</original>
    <variation>N</variation>
    <location>
        <position position="257"/>
    </location>
</feature>
<feature type="sequence conflict" description="In Ref. 3; CAA61011." evidence="12" ref="3">
    <original>Q</original>
    <variation>QE</variation>
    <location>
        <position position="306"/>
    </location>
</feature>
<feature type="sequence conflict" description="In Ref. 3; CAA61011." evidence="12" ref="3">
    <original>D</original>
    <variation>G</variation>
    <location>
        <position position="340"/>
    </location>
</feature>
<feature type="sequence conflict" description="In Ref. 3; CAA61011 and 2; AAH04598." evidence="12" ref="3 2">
    <original>P</original>
    <variation>L</variation>
    <location>
        <position position="515"/>
    </location>
</feature>
<feature type="sequence conflict" description="In Ref. 3; CAA61011 and 2; AAH04598." evidence="12" ref="3 2">
    <original>G</original>
    <variation>E</variation>
    <location>
        <position position="652"/>
    </location>
</feature>
<feature type="sequence conflict" description="In Ref. 3; CAA61011." evidence="12" ref="3">
    <original>RP</original>
    <variation>PA</variation>
    <location>
        <begin position="671"/>
        <end position="672"/>
    </location>
</feature>
<proteinExistence type="evidence at protein level"/>
<gene>
    <name evidence="13" type="primary">Sh3bp1</name>
    <name type="synonym">3bp1</name>
</gene>
<sequence>MMKRQLHRMRQLAHTGSSGRTPETAEFLGEDLLQVEQRLEPAKRAAHNVHKRLQACLQGQSGADMDKRVKKLPLMALSTTMAESFKELDPDSSMGKALEMTCAIQNQLARILAEFEMTLERDVLQPLSRLSEEELPAILKHKKSLQKLVSDWNTLKSRLSQAAKNSGSNQGLGGASGSHTHTTTANKVEMLKEEEEELKKKVEQCKDEYLADLYHFSTKEDSYANYFIHLLEIQADYHRKSLTSLDTALAELRDNHSQADHSPLTTAAPFSRVYGVSLRTHLQDLGRDIALPIEACVLLLLSEGMQEEGLFRLAAGASVLKRLKQTMASDPHSLEEFCSDPHAVAGALKSYLRELPEPLMTSDLYDDWMRAASLKEPGARLEALHDVCSRLPQENFNNLRYLMKFLALLAEEQDVNKMTPSNIAIVLGPNLLWPPEKEGDQAQLDAASVSSIQVVGVVEALIQNADTLFPGDINFNVSGIFPGLAPQEKVSSQQVSEELPPVTVPAPATTPAPTPAPASMAVRERTEADLPKPTSPKVSRNPTETAASAEDMTRKTKRPAPARPTMPPPQPSSTRSSPPAPSLPPGSVSPGTPQALPRRLVGTSLRAPTMPPPLPPVPPQPARRQSRRLPASPVISNMPAQVDQGVATEDRGGPEAVGGHPPPPALPPQPRPRGLISETE</sequence>